<gene>
    <name evidence="1" type="primary">hisA</name>
    <name type="ordered locus">CBO1570</name>
    <name type="ordered locus">CLC_1601</name>
</gene>
<accession>A5I244</accession>
<accession>A7G3U6</accession>
<organism>
    <name type="scientific">Clostridium botulinum (strain Hall / ATCC 3502 / NCTC 13319 / Type A)</name>
    <dbReference type="NCBI Taxonomy" id="441771"/>
    <lineage>
        <taxon>Bacteria</taxon>
        <taxon>Bacillati</taxon>
        <taxon>Bacillota</taxon>
        <taxon>Clostridia</taxon>
        <taxon>Eubacteriales</taxon>
        <taxon>Clostridiaceae</taxon>
        <taxon>Clostridium</taxon>
    </lineage>
</organism>
<dbReference type="EC" id="5.3.1.16" evidence="1"/>
<dbReference type="EMBL" id="CP000727">
    <property type="protein sequence ID" value="ABS37647.1"/>
    <property type="molecule type" value="Genomic_DNA"/>
</dbReference>
<dbReference type="EMBL" id="AM412317">
    <property type="protein sequence ID" value="CAL83109.1"/>
    <property type="molecule type" value="Genomic_DNA"/>
</dbReference>
<dbReference type="RefSeq" id="WP_011949114.1">
    <property type="nucleotide sequence ID" value="NC_009698.1"/>
</dbReference>
<dbReference type="RefSeq" id="YP_001254077.1">
    <property type="nucleotide sequence ID" value="NC_009495.1"/>
</dbReference>
<dbReference type="RefSeq" id="YP_001387461.1">
    <property type="nucleotide sequence ID" value="NC_009698.1"/>
</dbReference>
<dbReference type="SMR" id="A5I244"/>
<dbReference type="GeneID" id="5185825"/>
<dbReference type="KEGG" id="cbh:CLC_1601"/>
<dbReference type="KEGG" id="cbo:CBO1570"/>
<dbReference type="PATRIC" id="fig|413999.7.peg.1546"/>
<dbReference type="HOGENOM" id="CLU_048577_1_1_9"/>
<dbReference type="UniPathway" id="UPA00031">
    <property type="reaction ID" value="UER00009"/>
</dbReference>
<dbReference type="PRO" id="PR:A5I244"/>
<dbReference type="Proteomes" id="UP000001986">
    <property type="component" value="Chromosome"/>
</dbReference>
<dbReference type="GO" id="GO:0005737">
    <property type="term" value="C:cytoplasm"/>
    <property type="evidence" value="ECO:0007669"/>
    <property type="project" value="UniProtKB-SubCell"/>
</dbReference>
<dbReference type="GO" id="GO:0003949">
    <property type="term" value="F:1-(5-phosphoribosyl)-5-[(5-phosphoribosylamino)methylideneamino]imidazole-4-carboxamide isomerase activity"/>
    <property type="evidence" value="ECO:0007669"/>
    <property type="project" value="UniProtKB-UniRule"/>
</dbReference>
<dbReference type="GO" id="GO:0000107">
    <property type="term" value="F:imidazoleglycerol-phosphate synthase activity"/>
    <property type="evidence" value="ECO:0000318"/>
    <property type="project" value="GO_Central"/>
</dbReference>
<dbReference type="GO" id="GO:0000105">
    <property type="term" value="P:L-histidine biosynthetic process"/>
    <property type="evidence" value="ECO:0007669"/>
    <property type="project" value="UniProtKB-UniRule"/>
</dbReference>
<dbReference type="CDD" id="cd04732">
    <property type="entry name" value="HisA"/>
    <property type="match status" value="1"/>
</dbReference>
<dbReference type="FunFam" id="3.20.20.70:FF:000009">
    <property type="entry name" value="1-(5-phosphoribosyl)-5-[(5-phosphoribosylamino)methylideneamino] imidazole-4-carboxamide isomerase"/>
    <property type="match status" value="1"/>
</dbReference>
<dbReference type="Gene3D" id="3.20.20.70">
    <property type="entry name" value="Aldolase class I"/>
    <property type="match status" value="1"/>
</dbReference>
<dbReference type="HAMAP" id="MF_01014">
    <property type="entry name" value="HisA"/>
    <property type="match status" value="1"/>
</dbReference>
<dbReference type="InterPro" id="IPR013785">
    <property type="entry name" value="Aldolase_TIM"/>
</dbReference>
<dbReference type="InterPro" id="IPR006062">
    <property type="entry name" value="His_biosynth"/>
</dbReference>
<dbReference type="InterPro" id="IPR006063">
    <property type="entry name" value="HisA_bact_arch"/>
</dbReference>
<dbReference type="InterPro" id="IPR044524">
    <property type="entry name" value="Isoase_HisA-like"/>
</dbReference>
<dbReference type="InterPro" id="IPR023016">
    <property type="entry name" value="Isoase_HisA-like_bact"/>
</dbReference>
<dbReference type="InterPro" id="IPR011060">
    <property type="entry name" value="RibuloseP-bd_barrel"/>
</dbReference>
<dbReference type="NCBIfam" id="TIGR00007">
    <property type="entry name" value="1-(5-phosphoribosyl)-5-[(5-phosphoribosylamino)methylideneamino]imidazole-4-carboxamide isomerase"/>
    <property type="match status" value="1"/>
</dbReference>
<dbReference type="PANTHER" id="PTHR43090">
    <property type="entry name" value="1-(5-PHOSPHORIBOSYL)-5-[(5-PHOSPHORIBOSYLAMINO)METHYLIDENEAMINO] IMIDAZOLE-4-CARBOXAMIDE ISOMERASE"/>
    <property type="match status" value="1"/>
</dbReference>
<dbReference type="PANTHER" id="PTHR43090:SF2">
    <property type="entry name" value="1-(5-PHOSPHORIBOSYL)-5-[(5-PHOSPHORIBOSYLAMINO)METHYLIDENEAMINO] IMIDAZOLE-4-CARBOXAMIDE ISOMERASE"/>
    <property type="match status" value="1"/>
</dbReference>
<dbReference type="Pfam" id="PF00977">
    <property type="entry name" value="His_biosynth"/>
    <property type="match status" value="1"/>
</dbReference>
<dbReference type="SUPFAM" id="SSF51366">
    <property type="entry name" value="Ribulose-phoshate binding barrel"/>
    <property type="match status" value="1"/>
</dbReference>
<sequence>MIILPAIDLKEGKCIRLYQGDFKASKVVAEDPIEVALKFKENGAEYIHIVDLDGALTGEIKNLSIISSIIKTINIPVELGGGIRNLNTIDMLIGAGIERVILGTAALNNRGLVEEAVKKYDEKIAIGIDAKNEKVAINGWLNVSSINYIDFAKEMEKIGVRNIIFTDISKDGTLKGPNLKQLEKLNESINCNVIASGGIKDIEDLKGIKEMDVYGAIVGKAIYSGNINLNEAIKIINKGSSK</sequence>
<comment type="catalytic activity">
    <reaction evidence="1">
        <text>1-(5-phospho-beta-D-ribosyl)-5-[(5-phospho-beta-D-ribosylamino)methylideneamino]imidazole-4-carboxamide = 5-[(5-phospho-1-deoxy-D-ribulos-1-ylimino)methylamino]-1-(5-phospho-beta-D-ribosyl)imidazole-4-carboxamide</text>
        <dbReference type="Rhea" id="RHEA:15469"/>
        <dbReference type="ChEBI" id="CHEBI:58435"/>
        <dbReference type="ChEBI" id="CHEBI:58525"/>
        <dbReference type="EC" id="5.3.1.16"/>
    </reaction>
</comment>
<comment type="pathway">
    <text evidence="1">Amino-acid biosynthesis; L-histidine biosynthesis; L-histidine from 5-phospho-alpha-D-ribose 1-diphosphate: step 4/9.</text>
</comment>
<comment type="subcellular location">
    <subcellularLocation>
        <location evidence="1">Cytoplasm</location>
    </subcellularLocation>
</comment>
<comment type="similarity">
    <text evidence="1">Belongs to the HisA/HisF family.</text>
</comment>
<reference key="1">
    <citation type="journal article" date="2007" name="Genome Res.">
        <title>Genome sequence of a proteolytic (Group I) Clostridium botulinum strain Hall A and comparative analysis of the clostridial genomes.</title>
        <authorList>
            <person name="Sebaihia M."/>
            <person name="Peck M.W."/>
            <person name="Minton N.P."/>
            <person name="Thomson N.R."/>
            <person name="Holden M.T.G."/>
            <person name="Mitchell W.J."/>
            <person name="Carter A.T."/>
            <person name="Bentley S.D."/>
            <person name="Mason D.R."/>
            <person name="Crossman L."/>
            <person name="Paul C.J."/>
            <person name="Ivens A."/>
            <person name="Wells-Bennik M.H.J."/>
            <person name="Davis I.J."/>
            <person name="Cerdeno-Tarraga A.M."/>
            <person name="Churcher C."/>
            <person name="Quail M.A."/>
            <person name="Chillingworth T."/>
            <person name="Feltwell T."/>
            <person name="Fraser A."/>
            <person name="Goodhead I."/>
            <person name="Hance Z."/>
            <person name="Jagels K."/>
            <person name="Larke N."/>
            <person name="Maddison M."/>
            <person name="Moule S."/>
            <person name="Mungall K."/>
            <person name="Norbertczak H."/>
            <person name="Rabbinowitsch E."/>
            <person name="Sanders M."/>
            <person name="Simmonds M."/>
            <person name="White B."/>
            <person name="Whithead S."/>
            <person name="Parkhill J."/>
        </authorList>
    </citation>
    <scope>NUCLEOTIDE SEQUENCE [LARGE SCALE GENOMIC DNA]</scope>
    <source>
        <strain>Hall / ATCC 3502 / NCTC 13319 / Type A</strain>
    </source>
</reference>
<reference key="2">
    <citation type="journal article" date="2007" name="PLoS ONE">
        <title>Analysis of the neurotoxin complex genes in Clostridium botulinum A1-A4 and B1 strains: BoNT/A3, /Ba4 and /B1 clusters are located within plasmids.</title>
        <authorList>
            <person name="Smith T.J."/>
            <person name="Hill K.K."/>
            <person name="Foley B.T."/>
            <person name="Detter J.C."/>
            <person name="Munk A.C."/>
            <person name="Bruce D.C."/>
            <person name="Doggett N.A."/>
            <person name="Smith L.A."/>
            <person name="Marks J.D."/>
            <person name="Xie G."/>
            <person name="Brettin T.S."/>
        </authorList>
    </citation>
    <scope>NUCLEOTIDE SEQUENCE [LARGE SCALE GENOMIC DNA]</scope>
    <source>
        <strain>Hall / ATCC 3502 / NCTC 13319 / Type A</strain>
    </source>
</reference>
<name>HIS4_CLOBH</name>
<proteinExistence type="inferred from homology"/>
<protein>
    <recommendedName>
        <fullName evidence="1">1-(5-phosphoribosyl)-5-[(5-phosphoribosylamino)methylideneamino] imidazole-4-carboxamide isomerase</fullName>
        <ecNumber evidence="1">5.3.1.16</ecNumber>
    </recommendedName>
    <alternativeName>
        <fullName evidence="1">Phosphoribosylformimino-5-aminoimidazole carboxamide ribotide isomerase</fullName>
    </alternativeName>
</protein>
<keyword id="KW-0028">Amino-acid biosynthesis</keyword>
<keyword id="KW-0963">Cytoplasm</keyword>
<keyword id="KW-0368">Histidine biosynthesis</keyword>
<keyword id="KW-0413">Isomerase</keyword>
<keyword id="KW-1185">Reference proteome</keyword>
<evidence type="ECO:0000255" key="1">
    <source>
        <dbReference type="HAMAP-Rule" id="MF_01014"/>
    </source>
</evidence>
<feature type="chain" id="PRO_1000063202" description="1-(5-phosphoribosyl)-5-[(5-phosphoribosylamino)methylideneamino] imidazole-4-carboxamide isomerase">
    <location>
        <begin position="1"/>
        <end position="242"/>
    </location>
</feature>
<feature type="active site" description="Proton acceptor" evidence="1">
    <location>
        <position position="8"/>
    </location>
</feature>
<feature type="active site" description="Proton donor" evidence="1">
    <location>
        <position position="129"/>
    </location>
</feature>